<accession>Q1JP03</accession>
<name>RS8_STRPC</name>
<organism>
    <name type="scientific">Streptococcus pyogenes serotype M12 (strain MGAS9429)</name>
    <dbReference type="NCBI Taxonomy" id="370551"/>
    <lineage>
        <taxon>Bacteria</taxon>
        <taxon>Bacillati</taxon>
        <taxon>Bacillota</taxon>
        <taxon>Bacilli</taxon>
        <taxon>Lactobacillales</taxon>
        <taxon>Streptococcaceae</taxon>
        <taxon>Streptococcus</taxon>
    </lineage>
</organism>
<protein>
    <recommendedName>
        <fullName evidence="1">Small ribosomal subunit protein uS8</fullName>
    </recommendedName>
    <alternativeName>
        <fullName evidence="2">30S ribosomal protein S8</fullName>
    </alternativeName>
</protein>
<sequence>MVMTDPIADFLTRIRNANQVKHEVLEVPASNIKKGIAEILKREGFVKNVEVIEDDKQGIIRVFLKYGKNGERVITNLKRISKPGLRVYAKRDDMPKVLNGLGIAIISTSEGLLTDKEARQKNVGGEVIAYVW</sequence>
<feature type="chain" id="PRO_0000290942" description="Small ribosomal subunit protein uS8">
    <location>
        <begin position="1"/>
        <end position="132"/>
    </location>
</feature>
<evidence type="ECO:0000255" key="1">
    <source>
        <dbReference type="HAMAP-Rule" id="MF_01302"/>
    </source>
</evidence>
<evidence type="ECO:0000305" key="2"/>
<proteinExistence type="inferred from homology"/>
<reference key="1">
    <citation type="journal article" date="2006" name="Proc. Natl. Acad. Sci. U.S.A.">
        <title>Molecular genetic anatomy of inter- and intraserotype variation in the human bacterial pathogen group A Streptococcus.</title>
        <authorList>
            <person name="Beres S.B."/>
            <person name="Richter E.W."/>
            <person name="Nagiec M.J."/>
            <person name="Sumby P."/>
            <person name="Porcella S.F."/>
            <person name="DeLeo F.R."/>
            <person name="Musser J.M."/>
        </authorList>
    </citation>
    <scope>NUCLEOTIDE SEQUENCE [LARGE SCALE GENOMIC DNA]</scope>
    <source>
        <strain>MGAS9429</strain>
    </source>
</reference>
<gene>
    <name evidence="1" type="primary">rpsH</name>
    <name type="ordered locus">MGAS9429_Spy0058</name>
</gene>
<keyword id="KW-0687">Ribonucleoprotein</keyword>
<keyword id="KW-0689">Ribosomal protein</keyword>
<keyword id="KW-0694">RNA-binding</keyword>
<keyword id="KW-0699">rRNA-binding</keyword>
<dbReference type="EMBL" id="CP000259">
    <property type="protein sequence ID" value="ABF31246.1"/>
    <property type="molecule type" value="Genomic_DNA"/>
</dbReference>
<dbReference type="RefSeq" id="WP_002987748.1">
    <property type="nucleotide sequence ID" value="NC_008021.1"/>
</dbReference>
<dbReference type="SMR" id="Q1JP03"/>
<dbReference type="GeneID" id="69900040"/>
<dbReference type="KEGG" id="spk:MGAS9429_Spy0058"/>
<dbReference type="HOGENOM" id="CLU_098428_0_2_9"/>
<dbReference type="Proteomes" id="UP000002433">
    <property type="component" value="Chromosome"/>
</dbReference>
<dbReference type="GO" id="GO:1990904">
    <property type="term" value="C:ribonucleoprotein complex"/>
    <property type="evidence" value="ECO:0007669"/>
    <property type="project" value="UniProtKB-KW"/>
</dbReference>
<dbReference type="GO" id="GO:0005840">
    <property type="term" value="C:ribosome"/>
    <property type="evidence" value="ECO:0007669"/>
    <property type="project" value="UniProtKB-KW"/>
</dbReference>
<dbReference type="GO" id="GO:0019843">
    <property type="term" value="F:rRNA binding"/>
    <property type="evidence" value="ECO:0007669"/>
    <property type="project" value="UniProtKB-UniRule"/>
</dbReference>
<dbReference type="GO" id="GO:0003735">
    <property type="term" value="F:structural constituent of ribosome"/>
    <property type="evidence" value="ECO:0007669"/>
    <property type="project" value="InterPro"/>
</dbReference>
<dbReference type="GO" id="GO:0006412">
    <property type="term" value="P:translation"/>
    <property type="evidence" value="ECO:0007669"/>
    <property type="project" value="UniProtKB-UniRule"/>
</dbReference>
<dbReference type="FunFam" id="3.30.1370.30:FF:000002">
    <property type="entry name" value="30S ribosomal protein S8"/>
    <property type="match status" value="1"/>
</dbReference>
<dbReference type="FunFam" id="3.30.1490.10:FF:000001">
    <property type="entry name" value="30S ribosomal protein S8"/>
    <property type="match status" value="1"/>
</dbReference>
<dbReference type="Gene3D" id="3.30.1370.30">
    <property type="match status" value="1"/>
</dbReference>
<dbReference type="Gene3D" id="3.30.1490.10">
    <property type="match status" value="1"/>
</dbReference>
<dbReference type="HAMAP" id="MF_01302_B">
    <property type="entry name" value="Ribosomal_uS8_B"/>
    <property type="match status" value="1"/>
</dbReference>
<dbReference type="InterPro" id="IPR000630">
    <property type="entry name" value="Ribosomal_uS8"/>
</dbReference>
<dbReference type="InterPro" id="IPR047863">
    <property type="entry name" value="Ribosomal_uS8_CS"/>
</dbReference>
<dbReference type="InterPro" id="IPR035987">
    <property type="entry name" value="Ribosomal_uS8_sf"/>
</dbReference>
<dbReference type="NCBIfam" id="NF001109">
    <property type="entry name" value="PRK00136.1"/>
    <property type="match status" value="1"/>
</dbReference>
<dbReference type="PANTHER" id="PTHR11758">
    <property type="entry name" value="40S RIBOSOMAL PROTEIN S15A"/>
    <property type="match status" value="1"/>
</dbReference>
<dbReference type="Pfam" id="PF00410">
    <property type="entry name" value="Ribosomal_S8"/>
    <property type="match status" value="1"/>
</dbReference>
<dbReference type="SUPFAM" id="SSF56047">
    <property type="entry name" value="Ribosomal protein S8"/>
    <property type="match status" value="1"/>
</dbReference>
<dbReference type="PROSITE" id="PS00053">
    <property type="entry name" value="RIBOSOMAL_S8"/>
    <property type="match status" value="1"/>
</dbReference>
<comment type="function">
    <text evidence="1">One of the primary rRNA binding proteins, it binds directly to 16S rRNA central domain where it helps coordinate assembly of the platform of the 30S subunit.</text>
</comment>
<comment type="subunit">
    <text evidence="1">Part of the 30S ribosomal subunit. Contacts proteins S5 and S12.</text>
</comment>
<comment type="similarity">
    <text evidence="1">Belongs to the universal ribosomal protein uS8 family.</text>
</comment>